<evidence type="ECO:0000255" key="1">
    <source>
        <dbReference type="HAMAP-Rule" id="MF_01845"/>
    </source>
</evidence>
<protein>
    <recommendedName>
        <fullName evidence="1">UPF0597 protein YhaM</fullName>
    </recommendedName>
</protein>
<sequence length="436" mass="45139">MFESKINPLWQSFILAVQEEVKPALGCTEPISLALAAAAAAAELDGTVERIDAWVSPNLMKNGMGVTVPGTGMVGLPIAAALGALGGDAKAGLEVLKDASAKAVADAKAMLAAGHVAVMLQEPCNDILFSRAKVYSGDSWACVTIVGDHTNIVRIETDKGVVFTQADNAQEEEKTSPLGVLSHTSLEEILAFVNAVPFDAIRFILDAARLNGALSQEGLRGSWGLHIGSTLAKQCDRGLLAKDLSTAILIRTSAASDARMGGATLPAMSNSGSGNQGITATVPVMVVAEHVGADDERLARALMLSHLSAIYIHHQLPRLSALCAATTAAMGAAAGMAWLIDGRYDTIAMAISSMIGDVSGMICDGASNSCAMKVSTSASAAWKAVLMALDDTAVTGNEGIVAHNVEQSIANLCSLACRSMQQTDKQIIEIMASKAH</sequence>
<proteinExistence type="inferred from homology"/>
<reference key="1">
    <citation type="journal article" date="2011" name="J. Bacteriol.">
        <title>Comparative genomics of 28 Salmonella enterica isolates: evidence for CRISPR-mediated adaptive sublineage evolution.</title>
        <authorList>
            <person name="Fricke W.F."/>
            <person name="Mammel M.K."/>
            <person name="McDermott P.F."/>
            <person name="Tartera C."/>
            <person name="White D.G."/>
            <person name="Leclerc J.E."/>
            <person name="Ravel J."/>
            <person name="Cebula T.A."/>
        </authorList>
    </citation>
    <scope>NUCLEOTIDE SEQUENCE [LARGE SCALE GENOMIC DNA]</scope>
    <source>
        <strain>SL254</strain>
    </source>
</reference>
<organism>
    <name type="scientific">Salmonella newport (strain SL254)</name>
    <dbReference type="NCBI Taxonomy" id="423368"/>
    <lineage>
        <taxon>Bacteria</taxon>
        <taxon>Pseudomonadati</taxon>
        <taxon>Pseudomonadota</taxon>
        <taxon>Gammaproteobacteria</taxon>
        <taxon>Enterobacterales</taxon>
        <taxon>Enterobacteriaceae</taxon>
        <taxon>Salmonella</taxon>
    </lineage>
</organism>
<feature type="chain" id="PRO_1000188468" description="UPF0597 protein YhaM">
    <location>
        <begin position="1"/>
        <end position="436"/>
    </location>
</feature>
<dbReference type="EMBL" id="CP001113">
    <property type="protein sequence ID" value="ACF63276.1"/>
    <property type="molecule type" value="Genomic_DNA"/>
</dbReference>
<dbReference type="RefSeq" id="WP_000463070.1">
    <property type="nucleotide sequence ID" value="NZ_CCMR01000001.1"/>
</dbReference>
<dbReference type="SMR" id="B4T6A7"/>
<dbReference type="KEGG" id="see:SNSL254_A3500"/>
<dbReference type="HOGENOM" id="CLU_051840_0_0_6"/>
<dbReference type="Proteomes" id="UP000008824">
    <property type="component" value="Chromosome"/>
</dbReference>
<dbReference type="GO" id="GO:0080146">
    <property type="term" value="F:L-cysteine desulfhydrase activity"/>
    <property type="evidence" value="ECO:0007669"/>
    <property type="project" value="TreeGrafter"/>
</dbReference>
<dbReference type="GO" id="GO:0019450">
    <property type="term" value="P:L-cysteine catabolic process to pyruvate"/>
    <property type="evidence" value="ECO:0007669"/>
    <property type="project" value="TreeGrafter"/>
</dbReference>
<dbReference type="HAMAP" id="MF_01845">
    <property type="entry name" value="UPF0597"/>
    <property type="match status" value="1"/>
</dbReference>
<dbReference type="InterPro" id="IPR005130">
    <property type="entry name" value="Ser_deHydtase-like_asu"/>
</dbReference>
<dbReference type="InterPro" id="IPR021144">
    <property type="entry name" value="UPF0597"/>
</dbReference>
<dbReference type="PANTHER" id="PTHR30501">
    <property type="entry name" value="UPF0597 PROTEIN YHAM"/>
    <property type="match status" value="1"/>
</dbReference>
<dbReference type="PANTHER" id="PTHR30501:SF2">
    <property type="entry name" value="UPF0597 PROTEIN YHAM"/>
    <property type="match status" value="1"/>
</dbReference>
<dbReference type="Pfam" id="PF03313">
    <property type="entry name" value="SDH_alpha"/>
    <property type="match status" value="1"/>
</dbReference>
<dbReference type="PIRSF" id="PIRSF006054">
    <property type="entry name" value="UCP006054"/>
    <property type="match status" value="1"/>
</dbReference>
<name>YHAM_SALNS</name>
<accession>B4T6A7</accession>
<gene>
    <name evidence="1" type="primary">yhaM</name>
    <name type="ordered locus">SNSL254_A3500</name>
</gene>
<comment type="similarity">
    <text evidence="1">Belongs to the UPF0597 family.</text>
</comment>